<protein>
    <recommendedName>
        <fullName>Alpha-ketoglutarate-dependent sulfonate dioxygenase</fullName>
        <ecNumber>1.14.11.-</ecNumber>
    </recommendedName>
</protein>
<keyword id="KW-0223">Dioxygenase</keyword>
<keyword id="KW-0408">Iron</keyword>
<keyword id="KW-0479">Metal-binding</keyword>
<keyword id="KW-0560">Oxidoreductase</keyword>
<keyword id="KW-0597">Phosphoprotein</keyword>
<keyword id="KW-1185">Reference proteome</keyword>
<name>JLP1_YEAST</name>
<proteinExistence type="evidence at protein level"/>
<organism>
    <name type="scientific">Saccharomyces cerevisiae (strain ATCC 204508 / S288c)</name>
    <name type="common">Baker's yeast</name>
    <dbReference type="NCBI Taxonomy" id="559292"/>
    <lineage>
        <taxon>Eukaryota</taxon>
        <taxon>Fungi</taxon>
        <taxon>Dikarya</taxon>
        <taxon>Ascomycota</taxon>
        <taxon>Saccharomycotina</taxon>
        <taxon>Saccharomycetes</taxon>
        <taxon>Saccharomycetales</taxon>
        <taxon>Saccharomycetaceae</taxon>
        <taxon>Saccharomyces</taxon>
    </lineage>
</organism>
<sequence length="412" mass="46983">MSPAAAQTAIPLPSTDLPVKIITNGLKNLNYTSKQGYGNFDTHFYDGQDEVSPSGLLKIRKSYREKSKYPDYLPTWDPTEKYGPLEFHEYHDPALRADGNFSNLFAKENVGQLKVKKITPKLGLEINGIQLTDLSDAAKDELALLVAQKGVVVFRNQNFADEGPDYVTEYGRHFGKLHIHQTSGHPQNNPELHITFRRPDAEEFARVFDDSTSSGGWHTDVSYELQPPSYTFFSVVEGPDGGGDTLFADTIEAFDRLSKPLQDFLSTLHVIHSSKEQAENSQRQGGIKRRAPVTHIHPLVRVHPVLKKKCLYVNRAFSRKIVELKRQESESLLNFLYNLVESSHDLQLRAKWEPHSVVIWDNRRVQHSAVIDWEEPIHRHAFRITPQAERPVEDLKFLNDENYYPSSLTLDI</sequence>
<feature type="chain" id="PRO_0000194022" description="Alpha-ketoglutarate-dependent sulfonate dioxygenase">
    <location>
        <begin position="1"/>
        <end position="412"/>
    </location>
</feature>
<feature type="binding site" evidence="1">
    <location>
        <position position="218"/>
    </location>
    <ligand>
        <name>Fe cation</name>
        <dbReference type="ChEBI" id="CHEBI:24875"/>
        <note>catalytic</note>
    </ligand>
</feature>
<feature type="binding site" evidence="1">
    <location>
        <position position="220"/>
    </location>
    <ligand>
        <name>Fe cation</name>
        <dbReference type="ChEBI" id="CHEBI:24875"/>
        <note>catalytic</note>
    </ligand>
</feature>
<feature type="binding site" evidence="1">
    <location>
        <position position="245"/>
    </location>
    <ligand>
        <name>2-oxoglutarate</name>
        <dbReference type="ChEBI" id="CHEBI:16810"/>
    </ligand>
</feature>
<feature type="binding site" evidence="1">
    <location>
        <position position="352"/>
    </location>
    <ligand>
        <name>2-oxoglutarate</name>
        <dbReference type="ChEBI" id="CHEBI:16810"/>
    </ligand>
</feature>
<feature type="binding site" evidence="1">
    <location>
        <position position="367"/>
    </location>
    <ligand>
        <name>Fe cation</name>
        <dbReference type="ChEBI" id="CHEBI:24875"/>
        <note>catalytic</note>
    </ligand>
</feature>
<feature type="binding site" evidence="1">
    <location>
        <position position="379"/>
    </location>
    <ligand>
        <name>2-oxoglutarate</name>
        <dbReference type="ChEBI" id="CHEBI:16810"/>
    </ligand>
</feature>
<feature type="binding site" evidence="1">
    <location>
        <position position="383"/>
    </location>
    <ligand>
        <name>2-oxoglutarate</name>
        <dbReference type="ChEBI" id="CHEBI:16810"/>
    </ligand>
</feature>
<feature type="modified residue" description="Phosphoserine" evidence="4">
    <location>
        <position position="52"/>
    </location>
</feature>
<dbReference type="EC" id="1.14.11.-"/>
<dbReference type="EMBL" id="Z47973">
    <property type="protein sequence ID" value="CAA88000.1"/>
    <property type="molecule type" value="Genomic_DNA"/>
</dbReference>
<dbReference type="EMBL" id="Z73162">
    <property type="protein sequence ID" value="CAA97510.1"/>
    <property type="molecule type" value="Genomic_DNA"/>
</dbReference>
<dbReference type="EMBL" id="AY692737">
    <property type="protein sequence ID" value="AAT92756.1"/>
    <property type="molecule type" value="Genomic_DNA"/>
</dbReference>
<dbReference type="EMBL" id="BK006945">
    <property type="protein sequence ID" value="DAA09267.1"/>
    <property type="molecule type" value="Genomic_DNA"/>
</dbReference>
<dbReference type="PIR" id="S50963">
    <property type="entry name" value="S50963"/>
</dbReference>
<dbReference type="RefSeq" id="NP_013043.1">
    <property type="nucleotide sequence ID" value="NM_001181877.1"/>
</dbReference>
<dbReference type="SMR" id="Q12358"/>
<dbReference type="BioGRID" id="31258">
    <property type="interactions" value="50"/>
</dbReference>
<dbReference type="DIP" id="DIP-1933N"/>
<dbReference type="FunCoup" id="Q12358">
    <property type="interactions" value="40"/>
</dbReference>
<dbReference type="IntAct" id="Q12358">
    <property type="interactions" value="1"/>
</dbReference>
<dbReference type="MINT" id="Q12358"/>
<dbReference type="STRING" id="4932.YLL057C"/>
<dbReference type="iPTMnet" id="Q12358"/>
<dbReference type="PaxDb" id="4932-YLL057C"/>
<dbReference type="PeptideAtlas" id="Q12358"/>
<dbReference type="PRIDE" id="Q12358"/>
<dbReference type="EnsemblFungi" id="YLL057C_mRNA">
    <property type="protein sequence ID" value="YLL057C"/>
    <property type="gene ID" value="YLL057C"/>
</dbReference>
<dbReference type="GeneID" id="850669"/>
<dbReference type="KEGG" id="sce:YLL057C"/>
<dbReference type="AGR" id="SGD:S000003980"/>
<dbReference type="SGD" id="S000003980">
    <property type="gene designation" value="JLP1"/>
</dbReference>
<dbReference type="VEuPathDB" id="FungiDB:YLL057C"/>
<dbReference type="eggNOG" id="ENOG502QT05">
    <property type="taxonomic scope" value="Eukaryota"/>
</dbReference>
<dbReference type="HOGENOM" id="CLU_036005_0_0_1"/>
<dbReference type="InParanoid" id="Q12358"/>
<dbReference type="OMA" id="YENAWHS"/>
<dbReference type="OrthoDB" id="10257314at2759"/>
<dbReference type="BioCyc" id="YEAST:G3O-32156-MONOMER"/>
<dbReference type="UniPathway" id="UPA00338"/>
<dbReference type="BioGRID-ORCS" id="850669">
    <property type="hits" value="2 hits in 10 CRISPR screens"/>
</dbReference>
<dbReference type="PRO" id="PR:Q12358"/>
<dbReference type="Proteomes" id="UP000002311">
    <property type="component" value="Chromosome XII"/>
</dbReference>
<dbReference type="RNAct" id="Q12358">
    <property type="molecule type" value="protein"/>
</dbReference>
<dbReference type="GO" id="GO:0005737">
    <property type="term" value="C:cytoplasm"/>
    <property type="evidence" value="ECO:0000318"/>
    <property type="project" value="GO_Central"/>
</dbReference>
<dbReference type="GO" id="GO:0046872">
    <property type="term" value="F:metal ion binding"/>
    <property type="evidence" value="ECO:0007669"/>
    <property type="project" value="UniProtKB-KW"/>
</dbReference>
<dbReference type="GO" id="GO:0000907">
    <property type="term" value="F:sulfonate dioxygenase activity"/>
    <property type="evidence" value="ECO:0000314"/>
    <property type="project" value="SGD"/>
</dbReference>
<dbReference type="GO" id="GO:0046306">
    <property type="term" value="P:alkanesulfonate catabolic process"/>
    <property type="evidence" value="ECO:0007669"/>
    <property type="project" value="UniProtKB-UniPathway"/>
</dbReference>
<dbReference type="GO" id="GO:0044273">
    <property type="term" value="P:sulfur compound catabolic process"/>
    <property type="evidence" value="ECO:0000315"/>
    <property type="project" value="SGD"/>
</dbReference>
<dbReference type="FunFam" id="3.60.130.10:FF:000003">
    <property type="entry name" value="Alpha-ketoglutarate-dependent taurine dioxygenase"/>
    <property type="match status" value="1"/>
</dbReference>
<dbReference type="Gene3D" id="3.60.130.10">
    <property type="entry name" value="Clavaminate synthase-like"/>
    <property type="match status" value="1"/>
</dbReference>
<dbReference type="InterPro" id="IPR051323">
    <property type="entry name" value="AtsK-like"/>
</dbReference>
<dbReference type="InterPro" id="IPR042098">
    <property type="entry name" value="TauD-like_sf"/>
</dbReference>
<dbReference type="InterPro" id="IPR003819">
    <property type="entry name" value="TauD/TfdA-like"/>
</dbReference>
<dbReference type="PANTHER" id="PTHR30468">
    <property type="entry name" value="ALPHA-KETOGLUTARATE-DEPENDENT SULFONATE DIOXYGENASE"/>
    <property type="match status" value="1"/>
</dbReference>
<dbReference type="PANTHER" id="PTHR30468:SF1">
    <property type="entry name" value="ALPHA-KETOGLUTARATE-DEPENDENT SULFONATE DIOXYGENASE"/>
    <property type="match status" value="1"/>
</dbReference>
<dbReference type="Pfam" id="PF02668">
    <property type="entry name" value="TauD"/>
    <property type="match status" value="1"/>
</dbReference>
<dbReference type="SUPFAM" id="SSF51197">
    <property type="entry name" value="Clavaminate synthase-like"/>
    <property type="match status" value="1"/>
</dbReference>
<accession>Q12358</accession>
<accession>D6VXV1</accession>
<evidence type="ECO:0000250" key="1"/>
<evidence type="ECO:0000269" key="2">
    <source>
    </source>
</evidence>
<evidence type="ECO:0000305" key="3"/>
<evidence type="ECO:0007744" key="4">
    <source>
    </source>
</evidence>
<reference key="1">
    <citation type="submission" date="1995-01" db="EMBL/GenBank/DDBJ databases">
        <title>Sequence of a 37 kb DNA fragment from chromosome XII of Saccharomyces cerevisiae including the subtelomeric region of the left arm.</title>
        <authorList>
            <person name="Wedler H."/>
            <person name="Wambutt R."/>
        </authorList>
    </citation>
    <scope>NUCLEOTIDE SEQUENCE [GENOMIC DNA]</scope>
    <source>
        <strain>ATCC 204511 / S288c / AB972</strain>
    </source>
</reference>
<reference key="2">
    <citation type="journal article" date="1997" name="Nature">
        <title>The nucleotide sequence of Saccharomyces cerevisiae chromosome XII.</title>
        <authorList>
            <person name="Johnston M."/>
            <person name="Hillier L.W."/>
            <person name="Riles L."/>
            <person name="Albermann K."/>
            <person name="Andre B."/>
            <person name="Ansorge W."/>
            <person name="Benes V."/>
            <person name="Brueckner M."/>
            <person name="Delius H."/>
            <person name="Dubois E."/>
            <person name="Duesterhoeft A."/>
            <person name="Entian K.-D."/>
            <person name="Floeth M."/>
            <person name="Goffeau A."/>
            <person name="Hebling U."/>
            <person name="Heumann K."/>
            <person name="Heuss-Neitzel D."/>
            <person name="Hilbert H."/>
            <person name="Hilger F."/>
            <person name="Kleine K."/>
            <person name="Koetter P."/>
            <person name="Louis E.J."/>
            <person name="Messenguy F."/>
            <person name="Mewes H.-W."/>
            <person name="Miosga T."/>
            <person name="Moestl D."/>
            <person name="Mueller-Auer S."/>
            <person name="Nentwich U."/>
            <person name="Obermaier B."/>
            <person name="Piravandi E."/>
            <person name="Pohl T.M."/>
            <person name="Portetelle D."/>
            <person name="Purnelle B."/>
            <person name="Rechmann S."/>
            <person name="Rieger M."/>
            <person name="Rinke M."/>
            <person name="Rose M."/>
            <person name="Scharfe M."/>
            <person name="Scherens B."/>
            <person name="Scholler P."/>
            <person name="Schwager C."/>
            <person name="Schwarz S."/>
            <person name="Underwood A.P."/>
            <person name="Urrestarazu L.A."/>
            <person name="Vandenbol M."/>
            <person name="Verhasselt P."/>
            <person name="Vierendeels F."/>
            <person name="Voet M."/>
            <person name="Volckaert G."/>
            <person name="Voss H."/>
            <person name="Wambutt R."/>
            <person name="Wedler E."/>
            <person name="Wedler H."/>
            <person name="Zimmermann F.K."/>
            <person name="Zollner A."/>
            <person name="Hani J."/>
            <person name="Hoheisel J.D."/>
        </authorList>
    </citation>
    <scope>NUCLEOTIDE SEQUENCE [LARGE SCALE GENOMIC DNA]</scope>
    <source>
        <strain>ATCC 204508 / S288c</strain>
    </source>
</reference>
<reference key="3">
    <citation type="journal article" date="2014" name="G3 (Bethesda)">
        <title>The reference genome sequence of Saccharomyces cerevisiae: Then and now.</title>
        <authorList>
            <person name="Engel S.R."/>
            <person name="Dietrich F.S."/>
            <person name="Fisk D.G."/>
            <person name="Binkley G."/>
            <person name="Balakrishnan R."/>
            <person name="Costanzo M.C."/>
            <person name="Dwight S.S."/>
            <person name="Hitz B.C."/>
            <person name="Karra K."/>
            <person name="Nash R.S."/>
            <person name="Weng S."/>
            <person name="Wong E.D."/>
            <person name="Lloyd P."/>
            <person name="Skrzypek M.S."/>
            <person name="Miyasato S.R."/>
            <person name="Simison M."/>
            <person name="Cherry J.M."/>
        </authorList>
    </citation>
    <scope>GENOME REANNOTATION</scope>
    <source>
        <strain>ATCC 204508 / S288c</strain>
    </source>
</reference>
<reference key="4">
    <citation type="journal article" date="2007" name="Genome Res.">
        <title>Approaching a complete repository of sequence-verified protein-encoding clones for Saccharomyces cerevisiae.</title>
        <authorList>
            <person name="Hu Y."/>
            <person name="Rolfs A."/>
            <person name="Bhullar B."/>
            <person name="Murthy T.V.S."/>
            <person name="Zhu C."/>
            <person name="Berger M.F."/>
            <person name="Camargo A.A."/>
            <person name="Kelley F."/>
            <person name="McCarron S."/>
            <person name="Jepson D."/>
            <person name="Richardson A."/>
            <person name="Raphael J."/>
            <person name="Moreira D."/>
            <person name="Taycher E."/>
            <person name="Zuo D."/>
            <person name="Mohr S."/>
            <person name="Kane M.F."/>
            <person name="Williamson J."/>
            <person name="Simpson A.J.G."/>
            <person name="Bulyk M.L."/>
            <person name="Harlow E."/>
            <person name="Marsischky G."/>
            <person name="Kolodner R.D."/>
            <person name="LaBaer J."/>
        </authorList>
    </citation>
    <scope>NUCLEOTIDE SEQUENCE [GENOMIC DNA]</scope>
    <source>
        <strain>ATCC 204508 / S288c</strain>
    </source>
</reference>
<reference key="5">
    <citation type="journal article" date="1999" name="J. Bacteriol.">
        <title>Cloning and characterization of a sulfonate/alpha-ketoglutarate dioxygenase from Saccharomyces cerevisiae.</title>
        <authorList>
            <person name="Hogan D.A."/>
            <person name="Auchtung T.A."/>
            <person name="Hausinger R.P."/>
        </authorList>
    </citation>
    <scope>FUNCTION</scope>
    <scope>COFACTOR</scope>
</reference>
<reference key="6">
    <citation type="journal article" date="2009" name="Science">
        <title>Global analysis of Cdk1 substrate phosphorylation sites provides insights into evolution.</title>
        <authorList>
            <person name="Holt L.J."/>
            <person name="Tuch B.B."/>
            <person name="Villen J."/>
            <person name="Johnson A.D."/>
            <person name="Gygi S.P."/>
            <person name="Morgan D.O."/>
        </authorList>
    </citation>
    <scope>PHOSPHORYLATION [LARGE SCALE ANALYSIS] AT SER-52</scope>
    <scope>IDENTIFICATION BY MASS SPECTROMETRY [LARGE SCALE ANALYSIS]</scope>
</reference>
<comment type="function">
    <text evidence="2">Acts as an alpha-ketoglutarate-dependent dioxygenase active on sulfonates. Although taurine is a poor substrate, a variety of other sulfonates are utilized, with the best natural substrates being isethionate and taurocholate.</text>
</comment>
<comment type="cofactor">
    <cofactor evidence="1">
        <name>Fe(2+)</name>
        <dbReference type="ChEBI" id="CHEBI:29033"/>
    </cofactor>
    <text evidence="1">Binds 1 Fe(2+) ion per subunit.</text>
</comment>
<comment type="pathway">
    <text>Organosulfur degradation; alkanesulfonate degradation.</text>
</comment>
<comment type="similarity">
    <text evidence="3">Belongs to the TfdA dioxygenase family.</text>
</comment>
<gene>
    <name type="primary">JLP1</name>
    <name type="ordered locus">YLL057C</name>
    <name type="ORF">L0572</name>
</gene>